<comment type="function">
    <text evidence="2 3">Growth factor that plays an essential role in the regulation of embryonic development, cell proliferation, cell migration, survival and chemotaxis. Potent mitogen for cells of mesenchymal origin. Required for normal proliferation and recruitment of pericytes and vascular smooth muscle cells in the central nervous system, skin, lung, heart and placenta. Required for normal blood vessel development, and for normal development of kidney glomeruli. Plays an important role in wound healing. Signaling is modulated by the formation of heterodimers with PDGFA (By similarity).</text>
</comment>
<comment type="subunit">
    <text evidence="1 2">Antiparallel homodimer; disulfide-linked. Antiparallel heterodimer with PDGFA; disulfide-linked. The PDGFB homodimer interacts with PDGFRA and PDGFRB homodimers, and with heterodimers formed by PDGFRA and PDGFRB. The heterodimer composed of PDGFA and PDGFB interacts with PDGFRB homodimers, and with heterodimers formed by PDGFRA and PDGFRB. Interacts with XLKD1 (By similarity). Interacts with LRP1. Interacts with SORL1 (via the N-terminal ectodomain). Interacts with CD82; this interaction inhibits PDGFB-mediated signaling pathway (By similarity).</text>
</comment>
<comment type="subcellular location">
    <subcellularLocation>
        <location evidence="1">Secreted</location>
    </subcellularLocation>
    <text evidence="1">Released by platelets upon wounding.</text>
</comment>
<comment type="similarity">
    <text evidence="6">Belongs to the PDGF/VEGF growth factor family.</text>
</comment>
<name>PDGFB_SHEEP</name>
<organism>
    <name type="scientific">Ovis aries</name>
    <name type="common">Sheep</name>
    <dbReference type="NCBI Taxonomy" id="9940"/>
    <lineage>
        <taxon>Eukaryota</taxon>
        <taxon>Metazoa</taxon>
        <taxon>Chordata</taxon>
        <taxon>Craniata</taxon>
        <taxon>Vertebrata</taxon>
        <taxon>Euteleostomi</taxon>
        <taxon>Mammalia</taxon>
        <taxon>Eutheria</taxon>
        <taxon>Laurasiatheria</taxon>
        <taxon>Artiodactyla</taxon>
        <taxon>Ruminantia</taxon>
        <taxon>Pecora</taxon>
        <taxon>Bovidae</taxon>
        <taxon>Caprinae</taxon>
        <taxon>Ovis</taxon>
    </lineage>
</organism>
<evidence type="ECO:0000250" key="1"/>
<evidence type="ECO:0000250" key="2">
    <source>
        <dbReference type="UniProtKB" id="P01127"/>
    </source>
</evidence>
<evidence type="ECO:0000250" key="3">
    <source>
        <dbReference type="UniProtKB" id="P31240"/>
    </source>
</evidence>
<evidence type="ECO:0000255" key="4"/>
<evidence type="ECO:0000256" key="5">
    <source>
        <dbReference type="SAM" id="MobiDB-lite"/>
    </source>
</evidence>
<evidence type="ECO:0000305" key="6"/>
<keyword id="KW-0165">Cleavage on pair of basic residues</keyword>
<keyword id="KW-0217">Developmental protein</keyword>
<keyword id="KW-1015">Disulfide bond</keyword>
<keyword id="KW-0325">Glycoprotein</keyword>
<keyword id="KW-0339">Growth factor</keyword>
<keyword id="KW-0497">Mitogen</keyword>
<keyword id="KW-0656">Proto-oncogene</keyword>
<keyword id="KW-1185">Reference proteome</keyword>
<keyword id="KW-0964">Secreted</keyword>
<keyword id="KW-0732">Signal</keyword>
<accession>Q95229</accession>
<dbReference type="EMBL" id="X97123">
    <property type="protein sequence ID" value="CAA65790.1"/>
    <property type="molecule type" value="mRNA"/>
</dbReference>
<dbReference type="RefSeq" id="NP_001009471.1">
    <property type="nucleotide sequence ID" value="NM_001009471.1"/>
</dbReference>
<dbReference type="SMR" id="Q95229"/>
<dbReference type="STRING" id="9940.ENSOARP00000017621"/>
<dbReference type="GlyCosmos" id="Q95229">
    <property type="glycosylation" value="1 site, No reported glycans"/>
</dbReference>
<dbReference type="PaxDb" id="9940-ENSOARP00000017621"/>
<dbReference type="GeneID" id="443545"/>
<dbReference type="KEGG" id="oas:443545"/>
<dbReference type="CTD" id="5155"/>
<dbReference type="eggNOG" id="ENOG502S2VW">
    <property type="taxonomic scope" value="Eukaryota"/>
</dbReference>
<dbReference type="OrthoDB" id="8878063at2759"/>
<dbReference type="Proteomes" id="UP000002356">
    <property type="component" value="Unplaced"/>
</dbReference>
<dbReference type="GO" id="GO:0016323">
    <property type="term" value="C:basolateral plasma membrane"/>
    <property type="evidence" value="ECO:0000250"/>
    <property type="project" value="UniProtKB"/>
</dbReference>
<dbReference type="GO" id="GO:0009986">
    <property type="term" value="C:cell surface"/>
    <property type="evidence" value="ECO:0000250"/>
    <property type="project" value="UniProtKB"/>
</dbReference>
<dbReference type="GO" id="GO:0005737">
    <property type="term" value="C:cytoplasm"/>
    <property type="evidence" value="ECO:0000250"/>
    <property type="project" value="UniProtKB"/>
</dbReference>
<dbReference type="GO" id="GO:0005615">
    <property type="term" value="C:extracellular space"/>
    <property type="evidence" value="ECO:0007669"/>
    <property type="project" value="TreeGrafter"/>
</dbReference>
<dbReference type="GO" id="GO:0008083">
    <property type="term" value="F:growth factor activity"/>
    <property type="evidence" value="ECO:0000250"/>
    <property type="project" value="UniProtKB"/>
</dbReference>
<dbReference type="GO" id="GO:0005161">
    <property type="term" value="F:platelet-derived growth factor receptor binding"/>
    <property type="evidence" value="ECO:0000250"/>
    <property type="project" value="UniProtKB"/>
</dbReference>
<dbReference type="GO" id="GO:0042803">
    <property type="term" value="F:protein homodimerization activity"/>
    <property type="evidence" value="ECO:0000250"/>
    <property type="project" value="UniProtKB"/>
</dbReference>
<dbReference type="GO" id="GO:0016176">
    <property type="term" value="F:superoxide-generating NADPH oxidase activator activity"/>
    <property type="evidence" value="ECO:0000250"/>
    <property type="project" value="UniProtKB"/>
</dbReference>
<dbReference type="GO" id="GO:0060326">
    <property type="term" value="P:cell chemotaxis"/>
    <property type="evidence" value="ECO:0000250"/>
    <property type="project" value="UniProtKB"/>
</dbReference>
<dbReference type="GO" id="GO:0071506">
    <property type="term" value="P:cellular response to mycophenolic acid"/>
    <property type="evidence" value="ECO:0000250"/>
    <property type="project" value="UniProtKB"/>
</dbReference>
<dbReference type="GO" id="GO:0001892">
    <property type="term" value="P:embryonic placenta development"/>
    <property type="evidence" value="ECO:0000250"/>
    <property type="project" value="UniProtKB"/>
</dbReference>
<dbReference type="GO" id="GO:0007507">
    <property type="term" value="P:heart development"/>
    <property type="evidence" value="ECO:0000250"/>
    <property type="project" value="UniProtKB"/>
</dbReference>
<dbReference type="GO" id="GO:0072255">
    <property type="term" value="P:metanephric glomerular mesangial cell development"/>
    <property type="evidence" value="ECO:0000250"/>
    <property type="project" value="UniProtKB"/>
</dbReference>
<dbReference type="GO" id="GO:0002548">
    <property type="term" value="P:monocyte chemotaxis"/>
    <property type="evidence" value="ECO:0000250"/>
    <property type="project" value="UniProtKB"/>
</dbReference>
<dbReference type="GO" id="GO:0010629">
    <property type="term" value="P:negative regulation of gene expression"/>
    <property type="evidence" value="ECO:0000250"/>
    <property type="project" value="UniProtKB"/>
</dbReference>
<dbReference type="GO" id="GO:0010512">
    <property type="term" value="P:negative regulation of phosphatidylinositol biosynthetic process"/>
    <property type="evidence" value="ECO:0000250"/>
    <property type="project" value="UniProtKB"/>
</dbReference>
<dbReference type="GO" id="GO:0010544">
    <property type="term" value="P:negative regulation of platelet activation"/>
    <property type="evidence" value="ECO:0000250"/>
    <property type="project" value="UniProtKB"/>
</dbReference>
<dbReference type="GO" id="GO:0038001">
    <property type="term" value="P:paracrine signaling"/>
    <property type="evidence" value="ECO:0000250"/>
    <property type="project" value="UniProtKB"/>
</dbReference>
<dbReference type="GO" id="GO:0018108">
    <property type="term" value="P:peptidyl-tyrosine phosphorylation"/>
    <property type="evidence" value="ECO:0000250"/>
    <property type="project" value="UniProtKB"/>
</dbReference>
<dbReference type="GO" id="GO:0048008">
    <property type="term" value="P:platelet-derived growth factor receptor signaling pathway"/>
    <property type="evidence" value="ECO:0000250"/>
    <property type="project" value="UniProtKB"/>
</dbReference>
<dbReference type="GO" id="GO:0043536">
    <property type="term" value="P:positive regulation of blood vessel endothelial cell migration"/>
    <property type="evidence" value="ECO:0000250"/>
    <property type="project" value="UniProtKB"/>
</dbReference>
<dbReference type="GO" id="GO:0090280">
    <property type="term" value="P:positive regulation of calcium ion import"/>
    <property type="evidence" value="ECO:0000250"/>
    <property type="project" value="UniProtKB"/>
</dbReference>
<dbReference type="GO" id="GO:0051781">
    <property type="term" value="P:positive regulation of cell division"/>
    <property type="evidence" value="ECO:0007669"/>
    <property type="project" value="UniProtKB-KW"/>
</dbReference>
<dbReference type="GO" id="GO:0008284">
    <property type="term" value="P:positive regulation of cell population proliferation"/>
    <property type="evidence" value="ECO:0000250"/>
    <property type="project" value="UniProtKB"/>
</dbReference>
<dbReference type="GO" id="GO:0050921">
    <property type="term" value="P:positive regulation of chemotaxis"/>
    <property type="evidence" value="ECO:0000250"/>
    <property type="project" value="UniProtKB"/>
</dbReference>
<dbReference type="GO" id="GO:2000573">
    <property type="term" value="P:positive regulation of DNA biosynthetic process"/>
    <property type="evidence" value="ECO:0000250"/>
    <property type="project" value="UniProtKB"/>
</dbReference>
<dbReference type="GO" id="GO:0045893">
    <property type="term" value="P:positive regulation of DNA-templated transcription"/>
    <property type="evidence" value="ECO:0000250"/>
    <property type="project" value="UniProtKB"/>
</dbReference>
<dbReference type="GO" id="GO:0001938">
    <property type="term" value="P:positive regulation of endothelial cell proliferation"/>
    <property type="evidence" value="ECO:0000250"/>
    <property type="project" value="UniProtKB"/>
</dbReference>
<dbReference type="GO" id="GO:0070374">
    <property type="term" value="P:positive regulation of ERK1 and ERK2 cascade"/>
    <property type="evidence" value="ECO:0000250"/>
    <property type="project" value="UniProtKB"/>
</dbReference>
<dbReference type="GO" id="GO:0048146">
    <property type="term" value="P:positive regulation of fibroblast proliferation"/>
    <property type="evidence" value="ECO:0000250"/>
    <property type="project" value="UniProtKB"/>
</dbReference>
<dbReference type="GO" id="GO:0003104">
    <property type="term" value="P:positive regulation of glomerular filtration"/>
    <property type="evidence" value="ECO:0000250"/>
    <property type="project" value="UniProtKB"/>
</dbReference>
<dbReference type="GO" id="GO:0072126">
    <property type="term" value="P:positive regulation of glomerular mesangial cell proliferation"/>
    <property type="evidence" value="ECO:0000250"/>
    <property type="project" value="UniProtKB"/>
</dbReference>
<dbReference type="GO" id="GO:1900127">
    <property type="term" value="P:positive regulation of hyaluronan biosynthetic process"/>
    <property type="evidence" value="ECO:0000250"/>
    <property type="project" value="UniProtKB"/>
</dbReference>
<dbReference type="GO" id="GO:0043406">
    <property type="term" value="P:positive regulation of MAP kinase activity"/>
    <property type="evidence" value="ECO:0000250"/>
    <property type="project" value="UniProtKB"/>
</dbReference>
<dbReference type="GO" id="GO:0043410">
    <property type="term" value="P:positive regulation of MAPK cascade"/>
    <property type="evidence" value="ECO:0000250"/>
    <property type="project" value="UniProtKB"/>
</dbReference>
<dbReference type="GO" id="GO:2000591">
    <property type="term" value="P:positive regulation of metanephric mesenchymal cell migration"/>
    <property type="evidence" value="ECO:0000250"/>
    <property type="project" value="UniProtKB"/>
</dbReference>
<dbReference type="GO" id="GO:0035793">
    <property type="term" value="P:positive regulation of metanephric mesenchymal cell migration by platelet-derived growth factor receptor-beta signaling pathway"/>
    <property type="evidence" value="ECO:0000250"/>
    <property type="project" value="UniProtKB"/>
</dbReference>
<dbReference type="GO" id="GO:0045840">
    <property type="term" value="P:positive regulation of mitotic nuclear division"/>
    <property type="evidence" value="ECO:0000250"/>
    <property type="project" value="UniProtKB"/>
</dbReference>
<dbReference type="GO" id="GO:0051897">
    <property type="term" value="P:positive regulation of phosphatidylinositol 3-kinase/protein kinase B signal transduction"/>
    <property type="evidence" value="ECO:0000250"/>
    <property type="project" value="UniProtKB"/>
</dbReference>
<dbReference type="GO" id="GO:0031954">
    <property type="term" value="P:positive regulation of protein autophosphorylation"/>
    <property type="evidence" value="ECO:0000250"/>
    <property type="project" value="UniProtKB"/>
</dbReference>
<dbReference type="GO" id="GO:2000379">
    <property type="term" value="P:positive regulation of reactive oxygen species metabolic process"/>
    <property type="evidence" value="ECO:0000250"/>
    <property type="project" value="UniProtKB"/>
</dbReference>
<dbReference type="GO" id="GO:0014911">
    <property type="term" value="P:positive regulation of smooth muscle cell migration"/>
    <property type="evidence" value="ECO:0000250"/>
    <property type="project" value="UniProtKB"/>
</dbReference>
<dbReference type="GO" id="GO:0048661">
    <property type="term" value="P:positive regulation of smooth muscle cell proliferation"/>
    <property type="evidence" value="ECO:0000250"/>
    <property type="project" value="UniProtKB"/>
</dbReference>
<dbReference type="GO" id="GO:1904707">
    <property type="term" value="P:positive regulation of vascular associated smooth muscle cell proliferation"/>
    <property type="evidence" value="ECO:0000250"/>
    <property type="project" value="UniProtKB"/>
</dbReference>
<dbReference type="GO" id="GO:0006468">
    <property type="term" value="P:protein phosphorylation"/>
    <property type="evidence" value="ECO:0000250"/>
    <property type="project" value="UniProtKB"/>
</dbReference>
<dbReference type="GO" id="GO:0072593">
    <property type="term" value="P:reactive oxygen species metabolic process"/>
    <property type="evidence" value="ECO:0000250"/>
    <property type="project" value="UniProtKB"/>
</dbReference>
<dbReference type="GO" id="GO:0009611">
    <property type="term" value="P:response to wounding"/>
    <property type="evidence" value="ECO:0000250"/>
    <property type="project" value="UniProtKB"/>
</dbReference>
<dbReference type="CDD" id="cd00135">
    <property type="entry name" value="PDGF"/>
    <property type="match status" value="1"/>
</dbReference>
<dbReference type="FunFam" id="2.10.90.10:FF:000023">
    <property type="entry name" value="Platelet-derived growth factor subunit B"/>
    <property type="match status" value="1"/>
</dbReference>
<dbReference type="Gene3D" id="2.10.90.10">
    <property type="entry name" value="Cystine-knot cytokines"/>
    <property type="match status" value="1"/>
</dbReference>
<dbReference type="InterPro" id="IPR029034">
    <property type="entry name" value="Cystine-knot_cytokine"/>
</dbReference>
<dbReference type="InterPro" id="IPR023581">
    <property type="entry name" value="PD_growth_factor_CS"/>
</dbReference>
<dbReference type="InterPro" id="IPR000072">
    <property type="entry name" value="PDGF/VEGF_dom"/>
</dbReference>
<dbReference type="InterPro" id="IPR006782">
    <property type="entry name" value="PDGF_N"/>
</dbReference>
<dbReference type="PANTHER" id="PTHR11633">
    <property type="entry name" value="PLATELET-DERIVED GROWTH FACTOR"/>
    <property type="match status" value="1"/>
</dbReference>
<dbReference type="PANTHER" id="PTHR11633:SF2">
    <property type="entry name" value="PLATELET-DERIVED GROWTH FACTOR SUBUNIT B"/>
    <property type="match status" value="1"/>
</dbReference>
<dbReference type="Pfam" id="PF00341">
    <property type="entry name" value="PDGF"/>
    <property type="match status" value="1"/>
</dbReference>
<dbReference type="Pfam" id="PF04692">
    <property type="entry name" value="PDGF_N"/>
    <property type="match status" value="1"/>
</dbReference>
<dbReference type="SMART" id="SM00141">
    <property type="entry name" value="PDGF"/>
    <property type="match status" value="1"/>
</dbReference>
<dbReference type="SUPFAM" id="SSF57501">
    <property type="entry name" value="Cystine-knot cytokines"/>
    <property type="match status" value="1"/>
</dbReference>
<dbReference type="PROSITE" id="PS00249">
    <property type="entry name" value="PDGF_1"/>
    <property type="match status" value="1"/>
</dbReference>
<dbReference type="PROSITE" id="PS50278">
    <property type="entry name" value="PDGF_2"/>
    <property type="match status" value="1"/>
</dbReference>
<gene>
    <name type="primary">PDGFB</name>
</gene>
<feature type="signal peptide" evidence="1">
    <location>
        <begin position="1"/>
        <end position="20"/>
    </location>
</feature>
<feature type="propeptide" id="PRO_0000023380" description="Removed in mature form" evidence="1">
    <location>
        <begin position="21"/>
        <end position="81"/>
    </location>
</feature>
<feature type="chain" id="PRO_0000023381" description="Platelet-derived growth factor subunit B">
    <location>
        <begin position="82"/>
        <end position="190"/>
    </location>
</feature>
<feature type="propeptide" id="PRO_0000023382" description="Removed in mature form" evidence="1">
    <location>
        <begin position="191"/>
        <end position="241"/>
    </location>
</feature>
<feature type="region of interest" description="Disordered" evidence="5">
    <location>
        <begin position="217"/>
        <end position="241"/>
    </location>
</feature>
<feature type="compositionally biased region" description="Basic residues" evidence="5">
    <location>
        <begin position="217"/>
        <end position="230"/>
    </location>
</feature>
<feature type="site" description="Involved in receptor binding">
    <location>
        <position position="108"/>
    </location>
</feature>
<feature type="site" description="Involved in receptor binding">
    <location>
        <position position="111"/>
    </location>
</feature>
<feature type="glycosylation site" description="N-linked (GlcNAc...) asparagine" evidence="4">
    <location>
        <position position="63"/>
    </location>
</feature>
<feature type="disulfide bond" evidence="1">
    <location>
        <begin position="97"/>
        <end position="141"/>
    </location>
</feature>
<feature type="disulfide bond" description="Interchain" evidence="1">
    <location>
        <position position="124"/>
    </location>
</feature>
<feature type="disulfide bond" evidence="1">
    <location>
        <begin position="130"/>
        <end position="178"/>
    </location>
</feature>
<feature type="disulfide bond" description="Interchain" evidence="1">
    <location>
        <position position="133"/>
    </location>
</feature>
<feature type="disulfide bond" evidence="1">
    <location>
        <begin position="134"/>
        <end position="180"/>
    </location>
</feature>
<protein>
    <recommendedName>
        <fullName>Platelet-derived growth factor subunit B</fullName>
        <shortName>PDGF subunit B</shortName>
    </recommendedName>
    <alternativeName>
        <fullName>PDGF-2</fullName>
    </alternativeName>
    <alternativeName>
        <fullName>Platelet-derived growth factor B chain</fullName>
    </alternativeName>
    <alternativeName>
        <fullName>Platelet-derived growth factor beta polypeptide</fullName>
    </alternativeName>
</protein>
<proteinExistence type="evidence at transcript level"/>
<sequence>MNRCWALFLSLCCYLRLVSAEGDPIPEELYEMLSDHSIRSFDDLQRLLHGDSLDEDGAELDLNLTRSHSGGELESLSRGRRSLGSPTVAEPAVIAECKTRTEVSEISRRLIDRTNANFLVWPPCVEVQRCSGCCNNRNVQCRPTQVQDRKVQVKKIEIVRKKKIFKKATVTLVDHLACRCETVMARAVTRTPGSSQEQRAARTPQTRVTIRTVRVRRPPKGKHRKFKHTHDKTALKETLGA</sequence>
<reference key="1">
    <citation type="submission" date="1996-09" db="EMBL/GenBank/DDBJ databases">
        <title>The entire coding sequence of sheep platelet-derived growth factor B subunit cDNA.</title>
        <authorList>
            <person name="Woodall C.J."/>
            <person name="Zhang Z."/>
            <person name="Watt N.J."/>
        </authorList>
    </citation>
    <scope>NUCLEOTIDE SEQUENCE [MRNA]</scope>
    <source>
        <strain>Texel</strain>
        <tissue>Spleen</tissue>
    </source>
</reference>